<dbReference type="EC" id="4.2.1.109" evidence="1"/>
<dbReference type="EMBL" id="CP000155">
    <property type="protein sequence ID" value="ABC28682.1"/>
    <property type="status" value="ALT_INIT"/>
    <property type="molecule type" value="Genomic_DNA"/>
</dbReference>
<dbReference type="SMR" id="Q2SKZ2"/>
<dbReference type="STRING" id="349521.HCH_01844"/>
<dbReference type="KEGG" id="hch:HCH_01844"/>
<dbReference type="eggNOG" id="COG0235">
    <property type="taxonomic scope" value="Bacteria"/>
</dbReference>
<dbReference type="HOGENOM" id="CLU_006033_4_1_6"/>
<dbReference type="OrthoDB" id="9805559at2"/>
<dbReference type="UniPathway" id="UPA00904">
    <property type="reaction ID" value="UER00875"/>
</dbReference>
<dbReference type="Proteomes" id="UP000000238">
    <property type="component" value="Chromosome"/>
</dbReference>
<dbReference type="GO" id="GO:0005737">
    <property type="term" value="C:cytoplasm"/>
    <property type="evidence" value="ECO:0007669"/>
    <property type="project" value="InterPro"/>
</dbReference>
<dbReference type="GO" id="GO:0046570">
    <property type="term" value="F:methylthioribulose 1-phosphate dehydratase activity"/>
    <property type="evidence" value="ECO:0007669"/>
    <property type="project" value="UniProtKB-UniRule"/>
</dbReference>
<dbReference type="GO" id="GO:0008270">
    <property type="term" value="F:zinc ion binding"/>
    <property type="evidence" value="ECO:0007669"/>
    <property type="project" value="UniProtKB-UniRule"/>
</dbReference>
<dbReference type="GO" id="GO:0019509">
    <property type="term" value="P:L-methionine salvage from methylthioadenosine"/>
    <property type="evidence" value="ECO:0007669"/>
    <property type="project" value="UniProtKB-UniRule"/>
</dbReference>
<dbReference type="GO" id="GO:0005996">
    <property type="term" value="P:monosaccharide metabolic process"/>
    <property type="evidence" value="ECO:0007669"/>
    <property type="project" value="UniProtKB-ARBA"/>
</dbReference>
<dbReference type="Gene3D" id="3.40.225.10">
    <property type="entry name" value="Class II aldolase/adducin N-terminal domain"/>
    <property type="match status" value="1"/>
</dbReference>
<dbReference type="HAMAP" id="MF_01677">
    <property type="entry name" value="Salvage_MtnB"/>
    <property type="match status" value="1"/>
</dbReference>
<dbReference type="InterPro" id="IPR001303">
    <property type="entry name" value="Aldolase_II/adducin_N"/>
</dbReference>
<dbReference type="InterPro" id="IPR036409">
    <property type="entry name" value="Aldolase_II/adducin_N_sf"/>
</dbReference>
<dbReference type="InterPro" id="IPR017714">
    <property type="entry name" value="MethylthioRu-1-P_deHdtase_MtnB"/>
</dbReference>
<dbReference type="NCBIfam" id="NF006672">
    <property type="entry name" value="PRK09220.1"/>
    <property type="match status" value="1"/>
</dbReference>
<dbReference type="NCBIfam" id="TIGR03328">
    <property type="entry name" value="salvage_mtnB"/>
    <property type="match status" value="1"/>
</dbReference>
<dbReference type="PANTHER" id="PTHR10640">
    <property type="entry name" value="METHYLTHIORIBULOSE-1-PHOSPHATE DEHYDRATASE"/>
    <property type="match status" value="1"/>
</dbReference>
<dbReference type="PANTHER" id="PTHR10640:SF7">
    <property type="entry name" value="METHYLTHIORIBULOSE-1-PHOSPHATE DEHYDRATASE"/>
    <property type="match status" value="1"/>
</dbReference>
<dbReference type="Pfam" id="PF00596">
    <property type="entry name" value="Aldolase_II"/>
    <property type="match status" value="1"/>
</dbReference>
<dbReference type="SMART" id="SM01007">
    <property type="entry name" value="Aldolase_II"/>
    <property type="match status" value="1"/>
</dbReference>
<dbReference type="SUPFAM" id="SSF53639">
    <property type="entry name" value="AraD/HMP-PK domain-like"/>
    <property type="match status" value="1"/>
</dbReference>
<accession>Q2SKZ2</accession>
<gene>
    <name evidence="1" type="primary">mtnB</name>
    <name type="ordered locus">HCH_01844</name>
</gene>
<comment type="function">
    <text evidence="1">Catalyzes the dehydration of methylthioribulose-1-phosphate (MTRu-1-P) into 2,3-diketo-5-methylthiopentyl-1-phosphate (DK-MTP-1-P).</text>
</comment>
<comment type="catalytic activity">
    <reaction evidence="1">
        <text>5-(methylsulfanyl)-D-ribulose 1-phosphate = 5-methylsulfanyl-2,3-dioxopentyl phosphate + H2O</text>
        <dbReference type="Rhea" id="RHEA:15549"/>
        <dbReference type="ChEBI" id="CHEBI:15377"/>
        <dbReference type="ChEBI" id="CHEBI:58548"/>
        <dbReference type="ChEBI" id="CHEBI:58828"/>
        <dbReference type="EC" id="4.2.1.109"/>
    </reaction>
</comment>
<comment type="cofactor">
    <cofactor evidence="1">
        <name>Zn(2+)</name>
        <dbReference type="ChEBI" id="CHEBI:29105"/>
    </cofactor>
    <text evidence="1">Binds 1 zinc ion per subunit.</text>
</comment>
<comment type="pathway">
    <text evidence="1">Amino-acid biosynthesis; L-methionine biosynthesis via salvage pathway; L-methionine from S-methyl-5-thio-alpha-D-ribose 1-phosphate: step 2/6.</text>
</comment>
<comment type="similarity">
    <text evidence="1">Belongs to the aldolase class II family. MtnB subfamily.</text>
</comment>
<comment type="sequence caution" evidence="2">
    <conflict type="erroneous initiation">
        <sequence resource="EMBL-CDS" id="ABC28682"/>
    </conflict>
</comment>
<keyword id="KW-0028">Amino-acid biosynthesis</keyword>
<keyword id="KW-0456">Lyase</keyword>
<keyword id="KW-0479">Metal-binding</keyword>
<keyword id="KW-0486">Methionine biosynthesis</keyword>
<keyword id="KW-1185">Reference proteome</keyword>
<keyword id="KW-0862">Zinc</keyword>
<evidence type="ECO:0000255" key="1">
    <source>
        <dbReference type="HAMAP-Rule" id="MF_01677"/>
    </source>
</evidence>
<evidence type="ECO:0000305" key="2"/>
<sequence>MFDLHKFSLRAQEIIEAGGFLYGAGWSPATSSNYSARIDDANIAITVSGKHKGRLQAQDIMVVDLQGRAVASQMKSSAETLLHTVIYDLKPNVGAVLHTHSVTATVLSRALRPNTEIVFEDYELQKAFRGVYTHEGRCVVPIFDNTQDIEALSALSVEYLKEHSDCPGYLIRGHGMYTWGETMAECLRHVEAMEFLLACELEMMRIKS</sequence>
<reference key="1">
    <citation type="journal article" date="2005" name="Nucleic Acids Res.">
        <title>Genomic blueprint of Hahella chejuensis, a marine microbe producing an algicidal agent.</title>
        <authorList>
            <person name="Jeong H."/>
            <person name="Yim J.H."/>
            <person name="Lee C."/>
            <person name="Choi S.-H."/>
            <person name="Park Y.K."/>
            <person name="Yoon S.H."/>
            <person name="Hur C.-G."/>
            <person name="Kang H.-Y."/>
            <person name="Kim D."/>
            <person name="Lee H.H."/>
            <person name="Park K.H."/>
            <person name="Park S.-H."/>
            <person name="Park H.-S."/>
            <person name="Lee H.K."/>
            <person name="Oh T.K."/>
            <person name="Kim J.F."/>
        </authorList>
    </citation>
    <scope>NUCLEOTIDE SEQUENCE [LARGE SCALE GENOMIC DNA]</scope>
    <source>
        <strain>KCTC 2396</strain>
    </source>
</reference>
<proteinExistence type="inferred from homology"/>
<organism>
    <name type="scientific">Hahella chejuensis (strain KCTC 2396)</name>
    <dbReference type="NCBI Taxonomy" id="349521"/>
    <lineage>
        <taxon>Bacteria</taxon>
        <taxon>Pseudomonadati</taxon>
        <taxon>Pseudomonadota</taxon>
        <taxon>Gammaproteobacteria</taxon>
        <taxon>Oceanospirillales</taxon>
        <taxon>Hahellaceae</taxon>
        <taxon>Hahella</taxon>
    </lineage>
</organism>
<feature type="chain" id="PRO_0000357084" description="Methylthioribulose-1-phosphate dehydratase">
    <location>
        <begin position="1"/>
        <end position="208"/>
    </location>
</feature>
<feature type="binding site" evidence="1">
    <location>
        <position position="98"/>
    </location>
    <ligand>
        <name>Zn(2+)</name>
        <dbReference type="ChEBI" id="CHEBI:29105"/>
    </ligand>
</feature>
<feature type="binding site" evidence="1">
    <location>
        <position position="100"/>
    </location>
    <ligand>
        <name>Zn(2+)</name>
        <dbReference type="ChEBI" id="CHEBI:29105"/>
    </ligand>
</feature>
<protein>
    <recommendedName>
        <fullName evidence="1">Methylthioribulose-1-phosphate dehydratase</fullName>
        <shortName evidence="1">MTRu-1-P dehydratase</shortName>
        <ecNumber evidence="1">4.2.1.109</ecNumber>
    </recommendedName>
</protein>
<name>MTNB_HAHCH</name>